<evidence type="ECO:0000255" key="1">
    <source>
        <dbReference type="HAMAP-Rule" id="MF_00386"/>
    </source>
</evidence>
<keyword id="KW-1003">Cell membrane</keyword>
<keyword id="KW-0472">Membrane</keyword>
<proteinExistence type="inferred from homology"/>
<comment type="function">
    <text evidence="1">Could be involved in insertion of integral membrane proteins into the membrane.</text>
</comment>
<comment type="subcellular location">
    <subcellularLocation>
        <location evidence="1">Cell membrane</location>
        <topology evidence="1">Peripheral membrane protein</topology>
        <orientation evidence="1">Cytoplasmic side</orientation>
    </subcellularLocation>
</comment>
<comment type="similarity">
    <text evidence="1">Belongs to the UPF0161 family.</text>
</comment>
<name>YIDD_MOOTA</name>
<dbReference type="EMBL" id="CP000232">
    <property type="protein sequence ID" value="ABC20804.1"/>
    <property type="molecule type" value="Genomic_DNA"/>
</dbReference>
<dbReference type="RefSeq" id="YP_431347.1">
    <property type="nucleotide sequence ID" value="NC_007644.1"/>
</dbReference>
<dbReference type="STRING" id="264732.Moth_2522"/>
<dbReference type="EnsemblBacteria" id="ABC20804">
    <property type="protein sequence ID" value="ABC20804"/>
    <property type="gene ID" value="Moth_2522"/>
</dbReference>
<dbReference type="KEGG" id="mta:Moth_2522"/>
<dbReference type="PATRIC" id="fig|264732.11.peg.2745"/>
<dbReference type="eggNOG" id="COG0759">
    <property type="taxonomic scope" value="Bacteria"/>
</dbReference>
<dbReference type="HOGENOM" id="CLU_144811_6_0_9"/>
<dbReference type="OrthoDB" id="9801753at2"/>
<dbReference type="GO" id="GO:0005886">
    <property type="term" value="C:plasma membrane"/>
    <property type="evidence" value="ECO:0007669"/>
    <property type="project" value="UniProtKB-SubCell"/>
</dbReference>
<dbReference type="HAMAP" id="MF_00386">
    <property type="entry name" value="UPF0161_YidD"/>
    <property type="match status" value="1"/>
</dbReference>
<dbReference type="InterPro" id="IPR002696">
    <property type="entry name" value="Membr_insert_effic_factor_YidD"/>
</dbReference>
<dbReference type="NCBIfam" id="TIGR00278">
    <property type="entry name" value="membrane protein insertion efficiency factor YidD"/>
    <property type="match status" value="1"/>
</dbReference>
<dbReference type="PANTHER" id="PTHR33383">
    <property type="entry name" value="MEMBRANE PROTEIN INSERTION EFFICIENCY FACTOR-RELATED"/>
    <property type="match status" value="1"/>
</dbReference>
<dbReference type="PANTHER" id="PTHR33383:SF1">
    <property type="entry name" value="MEMBRANE PROTEIN INSERTION EFFICIENCY FACTOR-RELATED"/>
    <property type="match status" value="1"/>
</dbReference>
<dbReference type="Pfam" id="PF01809">
    <property type="entry name" value="YidD"/>
    <property type="match status" value="1"/>
</dbReference>
<dbReference type="SMART" id="SM01234">
    <property type="entry name" value="Haemolytic"/>
    <property type="match status" value="1"/>
</dbReference>
<protein>
    <recommendedName>
        <fullName evidence="1">Putative membrane protein insertion efficiency factor</fullName>
    </recommendedName>
</protein>
<accession>Q2RFI5</accession>
<sequence length="70" mass="8139">MIDNWVILAIRFYQRYISPLLGRHCRFYPTCSQYALEAITKYGLLRGGLLATRRLLHCHPWDAGGYDPVP</sequence>
<organism>
    <name type="scientific">Moorella thermoacetica (strain ATCC 39073 / JCM 9320)</name>
    <dbReference type="NCBI Taxonomy" id="264732"/>
    <lineage>
        <taxon>Bacteria</taxon>
        <taxon>Bacillati</taxon>
        <taxon>Bacillota</taxon>
        <taxon>Clostridia</taxon>
        <taxon>Moorellales</taxon>
        <taxon>Moorellaceae</taxon>
        <taxon>Moorella</taxon>
    </lineage>
</organism>
<gene>
    <name type="ordered locus">Moth_2522</name>
</gene>
<reference key="1">
    <citation type="journal article" date="2008" name="Environ. Microbiol.">
        <title>The complete genome sequence of Moorella thermoacetica (f. Clostridium thermoaceticum).</title>
        <authorList>
            <person name="Pierce E."/>
            <person name="Xie G."/>
            <person name="Barabote R.D."/>
            <person name="Saunders E."/>
            <person name="Han C.S."/>
            <person name="Detter J.C."/>
            <person name="Richardson P."/>
            <person name="Brettin T.S."/>
            <person name="Das A."/>
            <person name="Ljungdahl L.G."/>
            <person name="Ragsdale S.W."/>
        </authorList>
    </citation>
    <scope>NUCLEOTIDE SEQUENCE [LARGE SCALE GENOMIC DNA]</scope>
    <source>
        <strain>ATCC 39073 / JCM 9320</strain>
    </source>
</reference>
<feature type="chain" id="PRO_0000253127" description="Putative membrane protein insertion efficiency factor">
    <location>
        <begin position="1"/>
        <end position="70"/>
    </location>
</feature>